<proteinExistence type="inferred from homology"/>
<comment type="function">
    <text evidence="1">Converts 2C-methyl-D-erythritol 2,4-cyclodiphosphate (ME-2,4cPP) into 1-hydroxy-2-methyl-2-(E)-butenyl 4-diphosphate.</text>
</comment>
<comment type="catalytic activity">
    <reaction evidence="1">
        <text>(2E)-4-hydroxy-3-methylbut-2-enyl diphosphate + oxidized [flavodoxin] + H2O + 2 H(+) = 2-C-methyl-D-erythritol 2,4-cyclic diphosphate + reduced [flavodoxin]</text>
        <dbReference type="Rhea" id="RHEA:43604"/>
        <dbReference type="Rhea" id="RHEA-COMP:10622"/>
        <dbReference type="Rhea" id="RHEA-COMP:10623"/>
        <dbReference type="ChEBI" id="CHEBI:15377"/>
        <dbReference type="ChEBI" id="CHEBI:15378"/>
        <dbReference type="ChEBI" id="CHEBI:57618"/>
        <dbReference type="ChEBI" id="CHEBI:58210"/>
        <dbReference type="ChEBI" id="CHEBI:58483"/>
        <dbReference type="ChEBI" id="CHEBI:128753"/>
        <dbReference type="EC" id="1.17.7.3"/>
    </reaction>
</comment>
<comment type="cofactor">
    <cofactor evidence="1">
        <name>[4Fe-4S] cluster</name>
        <dbReference type="ChEBI" id="CHEBI:49883"/>
    </cofactor>
    <text evidence="1">Binds 1 [4Fe-4S] cluster.</text>
</comment>
<comment type="pathway">
    <text evidence="1">Isoprenoid biosynthesis; isopentenyl diphosphate biosynthesis via DXP pathway; isopentenyl diphosphate from 1-deoxy-D-xylulose 5-phosphate: step 5/6.</text>
</comment>
<comment type="similarity">
    <text evidence="1">Belongs to the IspG family.</text>
</comment>
<gene>
    <name evidence="1" type="primary">ispG</name>
    <name type="ordered locus">XF_2575</name>
</gene>
<dbReference type="EC" id="1.17.7.3" evidence="1"/>
<dbReference type="EMBL" id="AE003849">
    <property type="protein sequence ID" value="AAF85372.1"/>
    <property type="molecule type" value="Genomic_DNA"/>
</dbReference>
<dbReference type="PIR" id="B82542">
    <property type="entry name" value="B82542"/>
</dbReference>
<dbReference type="SMR" id="Q9PAE3"/>
<dbReference type="STRING" id="160492.XF_2575"/>
<dbReference type="KEGG" id="xfa:XF_2575"/>
<dbReference type="eggNOG" id="COG0821">
    <property type="taxonomic scope" value="Bacteria"/>
</dbReference>
<dbReference type="HOGENOM" id="CLU_042258_1_0_6"/>
<dbReference type="UniPathway" id="UPA00056">
    <property type="reaction ID" value="UER00096"/>
</dbReference>
<dbReference type="Proteomes" id="UP000000812">
    <property type="component" value="Chromosome"/>
</dbReference>
<dbReference type="GO" id="GO:0051539">
    <property type="term" value="F:4 iron, 4 sulfur cluster binding"/>
    <property type="evidence" value="ECO:0007669"/>
    <property type="project" value="UniProtKB-UniRule"/>
</dbReference>
<dbReference type="GO" id="GO:0046429">
    <property type="term" value="F:4-hydroxy-3-methylbut-2-en-1-yl diphosphate synthase activity (ferredoxin)"/>
    <property type="evidence" value="ECO:0007669"/>
    <property type="project" value="UniProtKB-UniRule"/>
</dbReference>
<dbReference type="GO" id="GO:0141197">
    <property type="term" value="F:4-hydroxy-3-methylbut-2-enyl-diphosphate synthase activity (flavodoxin)"/>
    <property type="evidence" value="ECO:0007669"/>
    <property type="project" value="UniProtKB-EC"/>
</dbReference>
<dbReference type="GO" id="GO:0005506">
    <property type="term" value="F:iron ion binding"/>
    <property type="evidence" value="ECO:0007669"/>
    <property type="project" value="InterPro"/>
</dbReference>
<dbReference type="GO" id="GO:0019288">
    <property type="term" value="P:isopentenyl diphosphate biosynthetic process, methylerythritol 4-phosphate pathway"/>
    <property type="evidence" value="ECO:0007669"/>
    <property type="project" value="UniProtKB-UniRule"/>
</dbReference>
<dbReference type="GO" id="GO:0016114">
    <property type="term" value="P:terpenoid biosynthetic process"/>
    <property type="evidence" value="ECO:0007669"/>
    <property type="project" value="InterPro"/>
</dbReference>
<dbReference type="FunFam" id="3.30.413.10:FF:000012">
    <property type="entry name" value="4-hydroxy-3-methylbut-2-en-1-yl diphosphate synthase (flavodoxin)"/>
    <property type="match status" value="1"/>
</dbReference>
<dbReference type="Gene3D" id="3.20.20.20">
    <property type="entry name" value="Dihydropteroate synthase-like"/>
    <property type="match status" value="1"/>
</dbReference>
<dbReference type="Gene3D" id="3.30.413.10">
    <property type="entry name" value="Sulfite Reductase Hemoprotein, domain 1"/>
    <property type="match status" value="1"/>
</dbReference>
<dbReference type="HAMAP" id="MF_00159">
    <property type="entry name" value="IspG"/>
    <property type="match status" value="1"/>
</dbReference>
<dbReference type="InterPro" id="IPR011005">
    <property type="entry name" value="Dihydropteroate_synth-like_sf"/>
</dbReference>
<dbReference type="InterPro" id="IPR016425">
    <property type="entry name" value="IspG_bac"/>
</dbReference>
<dbReference type="InterPro" id="IPR004588">
    <property type="entry name" value="IspG_bac-typ"/>
</dbReference>
<dbReference type="InterPro" id="IPR045854">
    <property type="entry name" value="NO2/SO3_Rdtase_4Fe4S_sf"/>
</dbReference>
<dbReference type="NCBIfam" id="TIGR00612">
    <property type="entry name" value="ispG_gcpE"/>
    <property type="match status" value="1"/>
</dbReference>
<dbReference type="NCBIfam" id="NF001540">
    <property type="entry name" value="PRK00366.1"/>
    <property type="match status" value="1"/>
</dbReference>
<dbReference type="PANTHER" id="PTHR30454">
    <property type="entry name" value="4-HYDROXY-3-METHYLBUT-2-EN-1-YL DIPHOSPHATE SYNTHASE"/>
    <property type="match status" value="1"/>
</dbReference>
<dbReference type="PANTHER" id="PTHR30454:SF0">
    <property type="entry name" value="4-HYDROXY-3-METHYLBUT-2-EN-1-YL DIPHOSPHATE SYNTHASE (FERREDOXIN), CHLOROPLASTIC"/>
    <property type="match status" value="1"/>
</dbReference>
<dbReference type="Pfam" id="PF04551">
    <property type="entry name" value="GcpE"/>
    <property type="match status" value="1"/>
</dbReference>
<dbReference type="PIRSF" id="PIRSF004640">
    <property type="entry name" value="IspG"/>
    <property type="match status" value="1"/>
</dbReference>
<dbReference type="SUPFAM" id="SSF56014">
    <property type="entry name" value="Nitrite and sulphite reductase 4Fe-4S domain-like"/>
    <property type="match status" value="1"/>
</dbReference>
<keyword id="KW-0004">4Fe-4S</keyword>
<keyword id="KW-0408">Iron</keyword>
<keyword id="KW-0411">Iron-sulfur</keyword>
<keyword id="KW-0414">Isoprene biosynthesis</keyword>
<keyword id="KW-0479">Metal-binding</keyword>
<keyword id="KW-0560">Oxidoreductase</keyword>
<name>ISPG_XYLFA</name>
<sequence length="417" mass="45035">MTPQVASDSAVPWPRRRTQAVNIGHVTVGGGHPVVVQSMTNTDTADVVASTKQVAELWRAGSEMVRLTVNNAQSAAAIPRIAERLAMMGIDVPLIGDFHYNGHQLLADEPACAEVLAKYRINPGNVGFGKKRDLQFGQLIECAIRYGKPIRIGANWGSLDQMLAAQLMDENNRRKQPWDAAQVLREVLICSAVGSAERAVELGLPRDRIVLSAKVSGVQELIAVYRDMAARCDFALHLGLTEAGIGSKGIVASSAALAVLLQEGIGDTIRISLTPEPGQSRTQEVIVAQELLQTTGHRAFTPMVTACPGCGRTTSEFFQELAKTVQQHVRDKMQVWKITHPGAETMTLAVMGCVVNGPGESRHANIGISLPGTGEMPVAPVFIDGEKSVTLRGENIAQDFIALVDDYVERRYARFPD</sequence>
<feature type="chain" id="PRO_0000190663" description="4-hydroxy-3-methylbut-2-en-1-yl diphosphate synthase (flavodoxin)">
    <location>
        <begin position="1"/>
        <end position="417"/>
    </location>
</feature>
<feature type="binding site" evidence="1">
    <location>
        <position position="307"/>
    </location>
    <ligand>
        <name>[4Fe-4S] cluster</name>
        <dbReference type="ChEBI" id="CHEBI:49883"/>
    </ligand>
</feature>
<feature type="binding site" evidence="1">
    <location>
        <position position="310"/>
    </location>
    <ligand>
        <name>[4Fe-4S] cluster</name>
        <dbReference type="ChEBI" id="CHEBI:49883"/>
    </ligand>
</feature>
<feature type="binding site" evidence="1">
    <location>
        <position position="353"/>
    </location>
    <ligand>
        <name>[4Fe-4S] cluster</name>
        <dbReference type="ChEBI" id="CHEBI:49883"/>
    </ligand>
</feature>
<feature type="binding site" evidence="1">
    <location>
        <position position="360"/>
    </location>
    <ligand>
        <name>[4Fe-4S] cluster</name>
        <dbReference type="ChEBI" id="CHEBI:49883"/>
    </ligand>
</feature>
<accession>Q9PAE3</accession>
<reference key="1">
    <citation type="journal article" date="2000" name="Nature">
        <title>The genome sequence of the plant pathogen Xylella fastidiosa.</title>
        <authorList>
            <person name="Simpson A.J.G."/>
            <person name="Reinach F.C."/>
            <person name="Arruda P."/>
            <person name="Abreu F.A."/>
            <person name="Acencio M."/>
            <person name="Alvarenga R."/>
            <person name="Alves L.M.C."/>
            <person name="Araya J.E."/>
            <person name="Baia G.S."/>
            <person name="Baptista C.S."/>
            <person name="Barros M.H."/>
            <person name="Bonaccorsi E.D."/>
            <person name="Bordin S."/>
            <person name="Bove J.M."/>
            <person name="Briones M.R.S."/>
            <person name="Bueno M.R.P."/>
            <person name="Camargo A.A."/>
            <person name="Camargo L.E.A."/>
            <person name="Carraro D.M."/>
            <person name="Carrer H."/>
            <person name="Colauto N.B."/>
            <person name="Colombo C."/>
            <person name="Costa F.F."/>
            <person name="Costa M.C.R."/>
            <person name="Costa-Neto C.M."/>
            <person name="Coutinho L.L."/>
            <person name="Cristofani M."/>
            <person name="Dias-Neto E."/>
            <person name="Docena C."/>
            <person name="El-Dorry H."/>
            <person name="Facincani A.P."/>
            <person name="Ferreira A.J.S."/>
            <person name="Ferreira V.C.A."/>
            <person name="Ferro J.A."/>
            <person name="Fraga J.S."/>
            <person name="Franca S.C."/>
            <person name="Franco M.C."/>
            <person name="Frohme M."/>
            <person name="Furlan L.R."/>
            <person name="Garnier M."/>
            <person name="Goldman G.H."/>
            <person name="Goldman M.H.S."/>
            <person name="Gomes S.L."/>
            <person name="Gruber A."/>
            <person name="Ho P.L."/>
            <person name="Hoheisel J.D."/>
            <person name="Junqueira M.L."/>
            <person name="Kemper E.L."/>
            <person name="Kitajima J.P."/>
            <person name="Krieger J.E."/>
            <person name="Kuramae E.E."/>
            <person name="Laigret F."/>
            <person name="Lambais M.R."/>
            <person name="Leite L.C.C."/>
            <person name="Lemos E.G.M."/>
            <person name="Lemos M.V.F."/>
            <person name="Lopes S.A."/>
            <person name="Lopes C.R."/>
            <person name="Machado J.A."/>
            <person name="Machado M.A."/>
            <person name="Madeira A.M.B.N."/>
            <person name="Madeira H.M.F."/>
            <person name="Marino C.L."/>
            <person name="Marques M.V."/>
            <person name="Martins E.A.L."/>
            <person name="Martins E.M.F."/>
            <person name="Matsukuma A.Y."/>
            <person name="Menck C.F.M."/>
            <person name="Miracca E.C."/>
            <person name="Miyaki C.Y."/>
            <person name="Monteiro-Vitorello C.B."/>
            <person name="Moon D.H."/>
            <person name="Nagai M.A."/>
            <person name="Nascimento A.L.T.O."/>
            <person name="Netto L.E.S."/>
            <person name="Nhani A. Jr."/>
            <person name="Nobrega F.G."/>
            <person name="Nunes L.R."/>
            <person name="Oliveira M.A."/>
            <person name="de Oliveira M.C."/>
            <person name="de Oliveira R.C."/>
            <person name="Palmieri D.A."/>
            <person name="Paris A."/>
            <person name="Peixoto B.R."/>
            <person name="Pereira G.A.G."/>
            <person name="Pereira H.A. Jr."/>
            <person name="Pesquero J.B."/>
            <person name="Quaggio R.B."/>
            <person name="Roberto P.G."/>
            <person name="Rodrigues V."/>
            <person name="de Rosa A.J.M."/>
            <person name="de Rosa V.E. Jr."/>
            <person name="de Sa R.G."/>
            <person name="Santelli R.V."/>
            <person name="Sawasaki H.E."/>
            <person name="da Silva A.C.R."/>
            <person name="da Silva A.M."/>
            <person name="da Silva F.R."/>
            <person name="Silva W.A. Jr."/>
            <person name="da Silveira J.F."/>
            <person name="Silvestri M.L.Z."/>
            <person name="Siqueira W.J."/>
            <person name="de Souza A.A."/>
            <person name="de Souza A.P."/>
            <person name="Terenzi M.F."/>
            <person name="Truffi D."/>
            <person name="Tsai S.M."/>
            <person name="Tsuhako M.H."/>
            <person name="Vallada H."/>
            <person name="Van Sluys M.A."/>
            <person name="Verjovski-Almeida S."/>
            <person name="Vettore A.L."/>
            <person name="Zago M.A."/>
            <person name="Zatz M."/>
            <person name="Meidanis J."/>
            <person name="Setubal J.C."/>
        </authorList>
    </citation>
    <scope>NUCLEOTIDE SEQUENCE [LARGE SCALE GENOMIC DNA]</scope>
    <source>
        <strain>9a5c</strain>
    </source>
</reference>
<organism>
    <name type="scientific">Xylella fastidiosa (strain 9a5c)</name>
    <dbReference type="NCBI Taxonomy" id="160492"/>
    <lineage>
        <taxon>Bacteria</taxon>
        <taxon>Pseudomonadati</taxon>
        <taxon>Pseudomonadota</taxon>
        <taxon>Gammaproteobacteria</taxon>
        <taxon>Lysobacterales</taxon>
        <taxon>Lysobacteraceae</taxon>
        <taxon>Xylella</taxon>
    </lineage>
</organism>
<evidence type="ECO:0000255" key="1">
    <source>
        <dbReference type="HAMAP-Rule" id="MF_00159"/>
    </source>
</evidence>
<protein>
    <recommendedName>
        <fullName evidence="1">4-hydroxy-3-methylbut-2-en-1-yl diphosphate synthase (flavodoxin)</fullName>
        <ecNumber evidence="1">1.17.7.3</ecNumber>
    </recommendedName>
    <alternativeName>
        <fullName evidence="1">1-hydroxy-2-methyl-2-(E)-butenyl 4-diphosphate synthase</fullName>
    </alternativeName>
</protein>